<comment type="function">
    <text evidence="1">DNA-dependent RNA polymerase (RNAP) catalyzes the transcription of DNA into RNA using the four ribonucleoside triphosphates as substrates.</text>
</comment>
<comment type="catalytic activity">
    <reaction evidence="1">
        <text>RNA(n) + a ribonucleoside 5'-triphosphate = RNA(n+1) + diphosphate</text>
        <dbReference type="Rhea" id="RHEA:21248"/>
        <dbReference type="Rhea" id="RHEA-COMP:14527"/>
        <dbReference type="Rhea" id="RHEA-COMP:17342"/>
        <dbReference type="ChEBI" id="CHEBI:33019"/>
        <dbReference type="ChEBI" id="CHEBI:61557"/>
        <dbReference type="ChEBI" id="CHEBI:140395"/>
        <dbReference type="EC" id="2.7.7.6"/>
    </reaction>
</comment>
<comment type="cofactor">
    <cofactor evidence="1">
        <name>Zn(2+)</name>
        <dbReference type="ChEBI" id="CHEBI:29105"/>
    </cofactor>
    <text evidence="1">Binds 1 zinc ion.</text>
</comment>
<comment type="subunit">
    <text evidence="1">Part of the RNA polymerase complex.</text>
</comment>
<comment type="subcellular location">
    <subcellularLocation>
        <location evidence="1">Cytoplasm</location>
    </subcellularLocation>
</comment>
<comment type="similarity">
    <text evidence="1">Belongs to the archaeal Rpo10/eukaryotic RPB10 RNA polymerase subunit family.</text>
</comment>
<proteinExistence type="inferred from homology"/>
<keyword id="KW-0963">Cytoplasm</keyword>
<keyword id="KW-0240">DNA-directed RNA polymerase</keyword>
<keyword id="KW-0479">Metal-binding</keyword>
<keyword id="KW-0548">Nucleotidyltransferase</keyword>
<keyword id="KW-0804">Transcription</keyword>
<keyword id="KW-0808">Transferase</keyword>
<keyword id="KW-0862">Zinc</keyword>
<protein>
    <recommendedName>
        <fullName evidence="1">DNA-directed RNA polymerase subunit Rpo10</fullName>
        <ecNumber evidence="1">2.7.7.6</ecNumber>
    </recommendedName>
    <alternativeName>
        <fullName evidence="1">DNA-directed RNA polymerase subunit N</fullName>
    </alternativeName>
</protein>
<dbReference type="EC" id="2.7.7.6" evidence="1"/>
<dbReference type="EMBL" id="CP001399">
    <property type="protein sequence ID" value="ACP36204.1"/>
    <property type="molecule type" value="Genomic_DNA"/>
</dbReference>
<dbReference type="RefSeq" id="WP_012712019.1">
    <property type="nucleotide sequence ID" value="NC_012589.1"/>
</dbReference>
<dbReference type="SMR" id="C3MJQ1"/>
<dbReference type="KEGG" id="sis:LS215_2217"/>
<dbReference type="HOGENOM" id="CLU_143122_1_1_2"/>
<dbReference type="OrthoDB" id="371754at2157"/>
<dbReference type="Proteomes" id="UP000001747">
    <property type="component" value="Chromosome"/>
</dbReference>
<dbReference type="GO" id="GO:0005737">
    <property type="term" value="C:cytoplasm"/>
    <property type="evidence" value="ECO:0007669"/>
    <property type="project" value="UniProtKB-SubCell"/>
</dbReference>
<dbReference type="GO" id="GO:0000428">
    <property type="term" value="C:DNA-directed RNA polymerase complex"/>
    <property type="evidence" value="ECO:0007669"/>
    <property type="project" value="UniProtKB-KW"/>
</dbReference>
<dbReference type="GO" id="GO:0003677">
    <property type="term" value="F:DNA binding"/>
    <property type="evidence" value="ECO:0007669"/>
    <property type="project" value="InterPro"/>
</dbReference>
<dbReference type="GO" id="GO:0003899">
    <property type="term" value="F:DNA-directed RNA polymerase activity"/>
    <property type="evidence" value="ECO:0007669"/>
    <property type="project" value="UniProtKB-UniRule"/>
</dbReference>
<dbReference type="GO" id="GO:0008270">
    <property type="term" value="F:zinc ion binding"/>
    <property type="evidence" value="ECO:0007669"/>
    <property type="project" value="UniProtKB-UniRule"/>
</dbReference>
<dbReference type="GO" id="GO:0006351">
    <property type="term" value="P:DNA-templated transcription"/>
    <property type="evidence" value="ECO:0007669"/>
    <property type="project" value="UniProtKB-UniRule"/>
</dbReference>
<dbReference type="FunFam" id="1.10.10.60:FF:000335">
    <property type="entry name" value="DNA-directed RNA polymerase subunit N, putative"/>
    <property type="match status" value="1"/>
</dbReference>
<dbReference type="Gene3D" id="1.10.10.60">
    <property type="entry name" value="Homeodomain-like"/>
    <property type="match status" value="1"/>
</dbReference>
<dbReference type="HAMAP" id="MF_00250">
    <property type="entry name" value="RNApol_arch_Rpo10"/>
    <property type="match status" value="1"/>
</dbReference>
<dbReference type="InterPro" id="IPR023580">
    <property type="entry name" value="RNA_pol_su_RPB10"/>
</dbReference>
<dbReference type="InterPro" id="IPR020789">
    <property type="entry name" value="RNA_pol_suN_Zn-BS"/>
</dbReference>
<dbReference type="InterPro" id="IPR000268">
    <property type="entry name" value="RPABC5/Rpb10"/>
</dbReference>
<dbReference type="NCBIfam" id="NF003089">
    <property type="entry name" value="PRK04016.1"/>
    <property type="match status" value="1"/>
</dbReference>
<dbReference type="PANTHER" id="PTHR23431:SF3">
    <property type="entry name" value="DNA-DIRECTED RNA POLYMERASES I, II, AND III SUBUNIT RPABC5"/>
    <property type="match status" value="1"/>
</dbReference>
<dbReference type="PANTHER" id="PTHR23431">
    <property type="entry name" value="DNA-DIRECTED RNA POLYMERASES I, II, AND III SUBUNIT RPABC5 FAMILY MEMBER"/>
    <property type="match status" value="1"/>
</dbReference>
<dbReference type="Pfam" id="PF01194">
    <property type="entry name" value="RNA_pol_N"/>
    <property type="match status" value="1"/>
</dbReference>
<dbReference type="PIRSF" id="PIRSF005653">
    <property type="entry name" value="RNA_pol_N/8_sub"/>
    <property type="match status" value="1"/>
</dbReference>
<dbReference type="SUPFAM" id="SSF46924">
    <property type="entry name" value="RNA polymerase subunit RPB10"/>
    <property type="match status" value="1"/>
</dbReference>
<dbReference type="PROSITE" id="PS01112">
    <property type="entry name" value="RNA_POL_N_8KD"/>
    <property type="match status" value="1"/>
</dbReference>
<sequence>MMIPIRCFTCGSLIADKWQPFITRVNAGENPGKVLDDLGVKRYCCRRMLLSHIDIISEVIHYTRPI</sequence>
<feature type="chain" id="PRO_1000204536" description="DNA-directed RNA polymerase subunit Rpo10">
    <location>
        <begin position="1"/>
        <end position="66"/>
    </location>
</feature>
<feature type="binding site" evidence="1">
    <location>
        <position position="7"/>
    </location>
    <ligand>
        <name>Zn(2+)</name>
        <dbReference type="ChEBI" id="CHEBI:29105"/>
    </ligand>
</feature>
<feature type="binding site" evidence="1">
    <location>
        <position position="10"/>
    </location>
    <ligand>
        <name>Zn(2+)</name>
        <dbReference type="ChEBI" id="CHEBI:29105"/>
    </ligand>
</feature>
<feature type="binding site" evidence="1">
    <location>
        <position position="44"/>
    </location>
    <ligand>
        <name>Zn(2+)</name>
        <dbReference type="ChEBI" id="CHEBI:29105"/>
    </ligand>
</feature>
<feature type="binding site" evidence="1">
    <location>
        <position position="45"/>
    </location>
    <ligand>
        <name>Zn(2+)</name>
        <dbReference type="ChEBI" id="CHEBI:29105"/>
    </ligand>
</feature>
<reference key="1">
    <citation type="journal article" date="2009" name="Proc. Natl. Acad. Sci. U.S.A.">
        <title>Biogeography of the Sulfolobus islandicus pan-genome.</title>
        <authorList>
            <person name="Reno M.L."/>
            <person name="Held N.L."/>
            <person name="Fields C.J."/>
            <person name="Burke P.V."/>
            <person name="Whitaker R.J."/>
        </authorList>
    </citation>
    <scope>NUCLEOTIDE SEQUENCE [LARGE SCALE GENOMIC DNA]</scope>
    <source>
        <strain>L.S.2.15 / Lassen #1</strain>
    </source>
</reference>
<gene>
    <name evidence="1" type="primary">rpo10</name>
    <name evidence="1" type="synonym">rpoN</name>
    <name type="ordered locus">LS215_2217</name>
</gene>
<accession>C3MJQ1</accession>
<name>RPO10_SACI2</name>
<evidence type="ECO:0000255" key="1">
    <source>
        <dbReference type="HAMAP-Rule" id="MF_00250"/>
    </source>
</evidence>
<organism>
    <name type="scientific">Saccharolobus islandicus (strain L.S.2.15 / Lassen #1)</name>
    <name type="common">Sulfolobus islandicus</name>
    <dbReference type="NCBI Taxonomy" id="429572"/>
    <lineage>
        <taxon>Archaea</taxon>
        <taxon>Thermoproteota</taxon>
        <taxon>Thermoprotei</taxon>
        <taxon>Sulfolobales</taxon>
        <taxon>Sulfolobaceae</taxon>
        <taxon>Saccharolobus</taxon>
    </lineage>
</organism>